<dbReference type="EMBL" id="AB021295">
    <property type="protein sequence ID" value="BAB32664.1"/>
    <property type="molecule type" value="mRNA"/>
</dbReference>
<dbReference type="EMBL" id="AB071603">
    <property type="protein sequence ID" value="BAC16229.1"/>
    <property type="molecule type" value="mRNA"/>
</dbReference>
<dbReference type="RefSeq" id="NP_446081.1">
    <property type="nucleotide sequence ID" value="NM_053629.4"/>
</dbReference>
<dbReference type="SMR" id="Q99PW7"/>
<dbReference type="FunCoup" id="Q99PW7">
    <property type="interactions" value="60"/>
</dbReference>
<dbReference type="STRING" id="10116.ENSRNOP00000012578"/>
<dbReference type="MEROPS" id="I01.968"/>
<dbReference type="GlyCosmos" id="Q99PW7">
    <property type="glycosylation" value="2 sites, No reported glycans"/>
</dbReference>
<dbReference type="GlyGen" id="Q99PW7">
    <property type="glycosylation" value="2 sites"/>
</dbReference>
<dbReference type="PhosphoSitePlus" id="Q99PW7"/>
<dbReference type="PaxDb" id="10116-ENSRNOP00000012578"/>
<dbReference type="Ensembl" id="ENSRNOT00000012578.6">
    <property type="protein sequence ID" value="ENSRNOP00000012578.3"/>
    <property type="gene ID" value="ENSRNOG00000009311.7"/>
</dbReference>
<dbReference type="GeneID" id="114031"/>
<dbReference type="KEGG" id="rno:114031"/>
<dbReference type="UCSC" id="RGD:621811">
    <property type="organism name" value="rat"/>
</dbReference>
<dbReference type="AGR" id="RGD:621811"/>
<dbReference type="CTD" id="10272"/>
<dbReference type="RGD" id="621811">
    <property type="gene designation" value="Fstl3"/>
</dbReference>
<dbReference type="eggNOG" id="KOG3649">
    <property type="taxonomic scope" value="Eukaryota"/>
</dbReference>
<dbReference type="GeneTree" id="ENSGT00940000161332"/>
<dbReference type="HOGENOM" id="CLU_050745_1_0_1"/>
<dbReference type="InParanoid" id="Q99PW7"/>
<dbReference type="OMA" id="HGGICWL"/>
<dbReference type="OrthoDB" id="16165at9989"/>
<dbReference type="PhylomeDB" id="Q99PW7"/>
<dbReference type="TreeFam" id="TF106409"/>
<dbReference type="Reactome" id="R-RNO-2473224">
    <property type="pathway name" value="Antagonism of Activin by Follistatin"/>
</dbReference>
<dbReference type="Reactome" id="R-RNO-381426">
    <property type="pathway name" value="Regulation of Insulin-like Growth Factor (IGF) transport and uptake by Insulin-like Growth Factor Binding Proteins (IGFBPs)"/>
</dbReference>
<dbReference type="Reactome" id="R-RNO-8957275">
    <property type="pathway name" value="Post-translational protein phosphorylation"/>
</dbReference>
<dbReference type="PRO" id="PR:Q99PW7"/>
<dbReference type="Proteomes" id="UP000002494">
    <property type="component" value="Chromosome 7"/>
</dbReference>
<dbReference type="Bgee" id="ENSRNOG00000009311">
    <property type="expression patterns" value="Expressed in testis and 19 other cell types or tissues"/>
</dbReference>
<dbReference type="GO" id="GO:0005576">
    <property type="term" value="C:extracellular region"/>
    <property type="evidence" value="ECO:0000318"/>
    <property type="project" value="GO_Central"/>
</dbReference>
<dbReference type="GO" id="GO:0005615">
    <property type="term" value="C:extracellular space"/>
    <property type="evidence" value="ECO:0000314"/>
    <property type="project" value="RGD"/>
</dbReference>
<dbReference type="GO" id="GO:0044306">
    <property type="term" value="C:neuron projection terminus"/>
    <property type="evidence" value="ECO:0000314"/>
    <property type="project" value="RGD"/>
</dbReference>
<dbReference type="GO" id="GO:0005634">
    <property type="term" value="C:nucleus"/>
    <property type="evidence" value="ECO:0000266"/>
    <property type="project" value="RGD"/>
</dbReference>
<dbReference type="GO" id="GO:0030141">
    <property type="term" value="C:secretory granule"/>
    <property type="evidence" value="ECO:0000314"/>
    <property type="project" value="RGD"/>
</dbReference>
<dbReference type="GO" id="GO:0048185">
    <property type="term" value="F:activin binding"/>
    <property type="evidence" value="ECO:0000266"/>
    <property type="project" value="RGD"/>
</dbReference>
<dbReference type="GO" id="GO:0001968">
    <property type="term" value="F:fibronectin binding"/>
    <property type="evidence" value="ECO:0000266"/>
    <property type="project" value="RGD"/>
</dbReference>
<dbReference type="GO" id="GO:0030325">
    <property type="term" value="P:adrenal gland development"/>
    <property type="evidence" value="ECO:0000270"/>
    <property type="project" value="RGD"/>
</dbReference>
<dbReference type="GO" id="GO:0030154">
    <property type="term" value="P:cell differentiation"/>
    <property type="evidence" value="ECO:0000318"/>
    <property type="project" value="GO_Central"/>
</dbReference>
<dbReference type="GO" id="GO:0071248">
    <property type="term" value="P:cellular response to metal ion"/>
    <property type="evidence" value="ECO:0000270"/>
    <property type="project" value="RGD"/>
</dbReference>
<dbReference type="GO" id="GO:0002244">
    <property type="term" value="P:hematopoietic progenitor cell differentiation"/>
    <property type="evidence" value="ECO:0000266"/>
    <property type="project" value="RGD"/>
</dbReference>
<dbReference type="GO" id="GO:0001822">
    <property type="term" value="P:kidney development"/>
    <property type="evidence" value="ECO:0000270"/>
    <property type="project" value="RGD"/>
</dbReference>
<dbReference type="GO" id="GO:0030324">
    <property type="term" value="P:lung development"/>
    <property type="evidence" value="ECO:0000270"/>
    <property type="project" value="RGD"/>
</dbReference>
<dbReference type="GO" id="GO:0008584">
    <property type="term" value="P:male gonad development"/>
    <property type="evidence" value="ECO:0000270"/>
    <property type="project" value="RGD"/>
</dbReference>
<dbReference type="GO" id="GO:0032926">
    <property type="term" value="P:negative regulation of activin receptor signaling pathway"/>
    <property type="evidence" value="ECO:0000266"/>
    <property type="project" value="RGD"/>
</dbReference>
<dbReference type="GO" id="GO:0030514">
    <property type="term" value="P:negative regulation of BMP signaling pathway"/>
    <property type="evidence" value="ECO:0000266"/>
    <property type="project" value="RGD"/>
</dbReference>
<dbReference type="GO" id="GO:0045671">
    <property type="term" value="P:negative regulation of osteoclast differentiation"/>
    <property type="evidence" value="ECO:0000266"/>
    <property type="project" value="RGD"/>
</dbReference>
<dbReference type="GO" id="GO:0090101">
    <property type="term" value="P:negative regulation of transmembrane receptor protein serine/threonine kinase signaling pathway"/>
    <property type="evidence" value="ECO:0000266"/>
    <property type="project" value="RGD"/>
</dbReference>
<dbReference type="GO" id="GO:0001503">
    <property type="term" value="P:ossification"/>
    <property type="evidence" value="ECO:0007669"/>
    <property type="project" value="UniProtKB-KW"/>
</dbReference>
<dbReference type="GO" id="GO:0022409">
    <property type="term" value="P:positive regulation of cell-cell adhesion"/>
    <property type="evidence" value="ECO:0000266"/>
    <property type="project" value="RGD"/>
</dbReference>
<dbReference type="GO" id="GO:0045944">
    <property type="term" value="P:positive regulation of transcription by RNA polymerase II"/>
    <property type="evidence" value="ECO:0000266"/>
    <property type="project" value="RGD"/>
</dbReference>
<dbReference type="GO" id="GO:0030510">
    <property type="term" value="P:regulation of BMP signaling pathway"/>
    <property type="evidence" value="ECO:0000318"/>
    <property type="project" value="GO_Central"/>
</dbReference>
<dbReference type="GO" id="GO:0006357">
    <property type="term" value="P:regulation of transcription by RNA polymerase II"/>
    <property type="evidence" value="ECO:0000266"/>
    <property type="project" value="RGD"/>
</dbReference>
<dbReference type="GO" id="GO:0007283">
    <property type="term" value="P:spermatogenesis"/>
    <property type="evidence" value="ECO:0000270"/>
    <property type="project" value="RGD"/>
</dbReference>
<dbReference type="CDD" id="cd00104">
    <property type="entry name" value="KAZAL_FS"/>
    <property type="match status" value="2"/>
</dbReference>
<dbReference type="FunFam" id="3.30.60.30:FF:000025">
    <property type="entry name" value="Follistatin-related protein 3"/>
    <property type="match status" value="1"/>
</dbReference>
<dbReference type="FunFam" id="3.30.60.30:FF:000028">
    <property type="entry name" value="Follistatin-related protein 3"/>
    <property type="match status" value="1"/>
</dbReference>
<dbReference type="FunFam" id="3.90.290.10:FF:000021">
    <property type="entry name" value="follistatin-related protein 3"/>
    <property type="match status" value="1"/>
</dbReference>
<dbReference type="Gene3D" id="3.30.60.30">
    <property type="match status" value="2"/>
</dbReference>
<dbReference type="Gene3D" id="3.90.290.10">
    <property type="entry name" value="TGF-beta binding (TB) domain"/>
    <property type="match status" value="1"/>
</dbReference>
<dbReference type="InterPro" id="IPR003645">
    <property type="entry name" value="Fol_N"/>
</dbReference>
<dbReference type="InterPro" id="IPR015369">
    <property type="entry name" value="Follistatin/Osteonectin_EGF"/>
</dbReference>
<dbReference type="InterPro" id="IPR002350">
    <property type="entry name" value="Kazal_dom"/>
</dbReference>
<dbReference type="InterPro" id="IPR036058">
    <property type="entry name" value="Kazal_dom_sf"/>
</dbReference>
<dbReference type="InterPro" id="IPR050653">
    <property type="entry name" value="Prot_Inhib_GrowthFact_Antg"/>
</dbReference>
<dbReference type="InterPro" id="IPR017878">
    <property type="entry name" value="TB_dom"/>
</dbReference>
<dbReference type="InterPro" id="IPR036773">
    <property type="entry name" value="TB_dom_sf"/>
</dbReference>
<dbReference type="PANTHER" id="PTHR10913:SF45">
    <property type="entry name" value="FOLLISTATIN, ISOFORM A-RELATED"/>
    <property type="match status" value="1"/>
</dbReference>
<dbReference type="PANTHER" id="PTHR10913">
    <property type="entry name" value="FOLLISTATIN-RELATED"/>
    <property type="match status" value="1"/>
</dbReference>
<dbReference type="Pfam" id="PF09289">
    <property type="entry name" value="FOLN"/>
    <property type="match status" value="1"/>
</dbReference>
<dbReference type="Pfam" id="PF21333">
    <property type="entry name" value="FST_N"/>
    <property type="match status" value="1"/>
</dbReference>
<dbReference type="Pfam" id="PF07648">
    <property type="entry name" value="Kazal_2"/>
    <property type="match status" value="2"/>
</dbReference>
<dbReference type="SMART" id="SM00274">
    <property type="entry name" value="FOLN"/>
    <property type="match status" value="2"/>
</dbReference>
<dbReference type="SMART" id="SM00280">
    <property type="entry name" value="KAZAL"/>
    <property type="match status" value="2"/>
</dbReference>
<dbReference type="SUPFAM" id="SSF100895">
    <property type="entry name" value="Kazal-type serine protease inhibitors"/>
    <property type="match status" value="2"/>
</dbReference>
<dbReference type="SUPFAM" id="SSF57581">
    <property type="entry name" value="TB module/8-cys domain"/>
    <property type="match status" value="1"/>
</dbReference>
<dbReference type="PROSITE" id="PS51465">
    <property type="entry name" value="KAZAL_2"/>
    <property type="match status" value="2"/>
</dbReference>
<dbReference type="PROSITE" id="PS51364">
    <property type="entry name" value="TB"/>
    <property type="match status" value="1"/>
</dbReference>
<keyword id="KW-1015">Disulfide bond</keyword>
<keyword id="KW-0325">Glycoprotein</keyword>
<keyword id="KW-0539">Nucleus</keyword>
<keyword id="KW-0892">Osteogenesis</keyword>
<keyword id="KW-1185">Reference proteome</keyword>
<keyword id="KW-0677">Repeat</keyword>
<keyword id="KW-0964">Secreted</keyword>
<keyword id="KW-0732">Signal</keyword>
<keyword id="KW-0804">Transcription</keyword>
<keyword id="KW-0805">Transcription regulation</keyword>
<evidence type="ECO:0000250" key="1"/>
<evidence type="ECO:0000255" key="2"/>
<evidence type="ECO:0000255" key="3">
    <source>
        <dbReference type="PROSITE-ProRule" id="PRU00697"/>
    </source>
</evidence>
<evidence type="ECO:0000255" key="4">
    <source>
        <dbReference type="PROSITE-ProRule" id="PRU00798"/>
    </source>
</evidence>
<accession>Q99PW7</accession>
<accession>Q54A93</accession>
<comment type="function">
    <text evidence="1">The secreted form is a binding and antagonizing protein for members of the TGF-beta family, such as activin, BMP2 and MSTN. Inhibits activin A-, activin B-, BMP2- and MSDT-induced cellular signaling; more effective on activin A than on activin B. Involved in bone formation; inhibits osteoclast differentiation. Involved in hematopoiesis; involved in differentiation of hemopoietic progenitor cells, increases hematopoietic cell adhesion to fibronectin and seems to contribute to the adhesion of hematopoietic precursor cells to the bone marrow stroma. The nuclear form is probably involved in transcriptional regulation via interaction with MLLT10 (By similarity).</text>
</comment>
<comment type="subunit">
    <text evidence="1">Interacts with INHBA and INHBB. Interacts with FN1. Interacts with ADAM12. Interacts with MLLT10; the interaction enhances MLLT10 in vitro transcriptional activity and self-association. Interacts with MSTN (By similarity).</text>
</comment>
<comment type="subcellular location">
    <subcellularLocation>
        <location evidence="1">Secreted</location>
    </subcellularLocation>
    <subcellularLocation>
        <location evidence="1">Nucleus</location>
    </subcellularLocation>
</comment>
<feature type="signal peptide" evidence="2">
    <location>
        <begin position="1"/>
        <end position="23"/>
    </location>
</feature>
<feature type="chain" id="PRO_0000010117" description="Follistatin-related protein 3">
    <location>
        <begin position="24"/>
        <end position="256"/>
    </location>
</feature>
<feature type="domain" description="TB" evidence="3">
    <location>
        <begin position="34"/>
        <end position="105"/>
    </location>
</feature>
<feature type="domain" description="Follistatin-like 1">
    <location>
        <begin position="97"/>
        <end position="117"/>
    </location>
</feature>
<feature type="domain" description="Kazal-like 1" evidence="4">
    <location>
        <begin position="111"/>
        <end position="167"/>
    </location>
</feature>
<feature type="domain" description="Follistatin-like 2">
    <location>
        <begin position="168"/>
        <end position="191"/>
    </location>
</feature>
<feature type="domain" description="Kazal-like 2" evidence="4">
    <location>
        <begin position="187"/>
        <end position="243"/>
    </location>
</feature>
<feature type="glycosylation site" description="N-linked (GlcNAc...) asparagine" evidence="2">
    <location>
        <position position="71"/>
    </location>
</feature>
<feature type="glycosylation site" description="N-linked (GlcNAc...) asparagine" evidence="2">
    <location>
        <position position="213"/>
    </location>
</feature>
<feature type="disulfide bond" evidence="3">
    <location>
        <begin position="36"/>
        <end position="59"/>
    </location>
</feature>
<feature type="disulfide bond" evidence="3">
    <location>
        <begin position="46"/>
        <end position="90"/>
    </location>
</feature>
<feature type="disulfide bond" evidence="3">
    <location>
        <begin position="60"/>
        <end position="93"/>
    </location>
</feature>
<feature type="disulfide bond" evidence="4">
    <location>
        <begin position="97"/>
        <end position="108"/>
    </location>
</feature>
<feature type="disulfide bond" evidence="4">
    <location>
        <begin position="102"/>
        <end position="117"/>
    </location>
</feature>
<feature type="disulfide bond" evidence="4">
    <location>
        <begin position="119"/>
        <end position="151"/>
    </location>
</feature>
<feature type="disulfide bond" evidence="4">
    <location>
        <begin position="123"/>
        <end position="144"/>
    </location>
</feature>
<feature type="disulfide bond" evidence="4">
    <location>
        <begin position="133"/>
        <end position="165"/>
    </location>
</feature>
<feature type="disulfide bond" evidence="4">
    <location>
        <begin position="193"/>
        <end position="227"/>
    </location>
</feature>
<feature type="disulfide bond" evidence="4">
    <location>
        <begin position="198"/>
        <end position="220"/>
    </location>
</feature>
<feature type="disulfide bond" evidence="4">
    <location>
        <begin position="209"/>
        <end position="241"/>
    </location>
</feature>
<proteinExistence type="evidence at transcript level"/>
<reference key="1">
    <citation type="submission" date="1998-12" db="EMBL/GenBank/DDBJ databases">
        <title>Rat follistatin-related protein FLRG (rat PCTF35, PC12 cell derived trophic factor 35).</title>
        <authorList>
            <person name="Uchiyama Y."/>
            <person name="Ohsawa Y."/>
            <person name="Kametaka S."/>
        </authorList>
    </citation>
    <scope>NUCLEOTIDE SEQUENCE [MRNA]</scope>
</reference>
<reference key="2">
    <citation type="journal article" date="2003" name="Biol. Reprod.">
        <title>Characterization of rat follistatin-related gene: effects of estrous cycle stage and pregnancy on its messenger RNA expression in rat reproductive tissues.</title>
        <authorList>
            <person name="Arai K.Y."/>
            <person name="Tsuchida K."/>
            <person name="Uehara K."/>
            <person name="Taya K."/>
            <person name="Sugino H."/>
        </authorList>
    </citation>
    <scope>NUCLEOTIDE SEQUENCE [MRNA]</scope>
    <source>
        <strain>Wistar</strain>
        <tissue>Placenta</tissue>
    </source>
</reference>
<sequence>MRPGALWPLLWGALVWAVGSVGAVMGSGDSVPGGVCWLQQGKEATCSLVLKTQVSREECCASGNINTAWSNFTHPGNKISLLGFLGLVHCLPCKDSCDGVECGPGKACRMLGGRPHCECVSNCEGVPAGFQVCGSDGATYRDECELRTARCRGHPDLRVMYRGRCQKSCAQVVCPRPQSCLVDQTGSAHCVVCRAAPCPVPPNPGQELCGNNNVTYISSCHLRQATCFLGRSIGVRHPGICTGGPKVPAEEEENFV</sequence>
<protein>
    <recommendedName>
        <fullName>Follistatin-related protein 3</fullName>
    </recommendedName>
    <alternativeName>
        <fullName>Follistatin-like protein 3</fullName>
    </alternativeName>
    <alternativeName>
        <fullName>Follistatin-related gene protein</fullName>
    </alternativeName>
</protein>
<name>FSTL3_RAT</name>
<organism>
    <name type="scientific">Rattus norvegicus</name>
    <name type="common">Rat</name>
    <dbReference type="NCBI Taxonomy" id="10116"/>
    <lineage>
        <taxon>Eukaryota</taxon>
        <taxon>Metazoa</taxon>
        <taxon>Chordata</taxon>
        <taxon>Craniata</taxon>
        <taxon>Vertebrata</taxon>
        <taxon>Euteleostomi</taxon>
        <taxon>Mammalia</taxon>
        <taxon>Eutheria</taxon>
        <taxon>Euarchontoglires</taxon>
        <taxon>Glires</taxon>
        <taxon>Rodentia</taxon>
        <taxon>Myomorpha</taxon>
        <taxon>Muroidea</taxon>
        <taxon>Muridae</taxon>
        <taxon>Murinae</taxon>
        <taxon>Rattus</taxon>
    </lineage>
</organism>
<gene>
    <name type="primary">Fstl3</name>
    <name type="synonym">Flrg</name>
</gene>